<evidence type="ECO:0000255" key="1">
    <source>
        <dbReference type="HAMAP-Rule" id="MF_01333"/>
    </source>
</evidence>
<evidence type="ECO:0000305" key="2"/>
<keyword id="KW-1185">Reference proteome</keyword>
<keyword id="KW-0687">Ribonucleoprotein</keyword>
<keyword id="KW-0689">Ribosomal protein</keyword>
<keyword id="KW-0694">RNA-binding</keyword>
<keyword id="KW-0699">rRNA-binding</keyword>
<keyword id="KW-0820">tRNA-binding</keyword>
<gene>
    <name evidence="1" type="primary">rplE</name>
    <name type="ordered locus">Rleg2_1344</name>
</gene>
<organism>
    <name type="scientific">Rhizobium leguminosarum bv. trifolii (strain WSM2304)</name>
    <dbReference type="NCBI Taxonomy" id="395492"/>
    <lineage>
        <taxon>Bacteria</taxon>
        <taxon>Pseudomonadati</taxon>
        <taxon>Pseudomonadota</taxon>
        <taxon>Alphaproteobacteria</taxon>
        <taxon>Hyphomicrobiales</taxon>
        <taxon>Rhizobiaceae</taxon>
        <taxon>Rhizobium/Agrobacterium group</taxon>
        <taxon>Rhizobium</taxon>
    </lineage>
</organism>
<comment type="function">
    <text evidence="1">This is one of the proteins that bind and probably mediate the attachment of the 5S RNA into the large ribosomal subunit, where it forms part of the central protuberance. In the 70S ribosome it contacts protein S13 of the 30S subunit (bridge B1b), connecting the 2 subunits; this bridge is implicated in subunit movement. Contacts the P site tRNA; the 5S rRNA and some of its associated proteins might help stabilize positioning of ribosome-bound tRNAs.</text>
</comment>
<comment type="subunit">
    <text evidence="1">Part of the 50S ribosomal subunit; part of the 5S rRNA/L5/L18/L25 subcomplex. Contacts the 5S rRNA and the P site tRNA. Forms a bridge to the 30S subunit in the 70S ribosome.</text>
</comment>
<comment type="similarity">
    <text evidence="1">Belongs to the universal ribosomal protein uL5 family.</text>
</comment>
<reference key="1">
    <citation type="journal article" date="2010" name="Stand. Genomic Sci.">
        <title>Complete genome sequence of Rhizobium leguminosarum bv trifolii strain WSM2304, an effective microsymbiont of the South American clover Trifolium polymorphum.</title>
        <authorList>
            <person name="Reeve W."/>
            <person name="O'Hara G."/>
            <person name="Chain P."/>
            <person name="Ardley J."/>
            <person name="Brau L."/>
            <person name="Nandesena K."/>
            <person name="Tiwari R."/>
            <person name="Malfatti S."/>
            <person name="Kiss H."/>
            <person name="Lapidus A."/>
            <person name="Copeland A."/>
            <person name="Nolan M."/>
            <person name="Land M."/>
            <person name="Ivanova N."/>
            <person name="Mavromatis K."/>
            <person name="Markowitz V."/>
            <person name="Kyrpides N."/>
            <person name="Melino V."/>
            <person name="Denton M."/>
            <person name="Yates R."/>
            <person name="Howieson J."/>
        </authorList>
    </citation>
    <scope>NUCLEOTIDE SEQUENCE [LARGE SCALE GENOMIC DNA]</scope>
    <source>
        <strain>WSM2304</strain>
    </source>
</reference>
<accession>B5ZYU7</accession>
<name>RL5_RHILW</name>
<dbReference type="EMBL" id="CP001191">
    <property type="protein sequence ID" value="ACI54638.1"/>
    <property type="molecule type" value="Genomic_DNA"/>
</dbReference>
<dbReference type="RefSeq" id="WP_012557364.1">
    <property type="nucleotide sequence ID" value="NC_011369.1"/>
</dbReference>
<dbReference type="SMR" id="B5ZYU7"/>
<dbReference type="STRING" id="395492.Rleg2_1344"/>
<dbReference type="KEGG" id="rlt:Rleg2_1344"/>
<dbReference type="eggNOG" id="COG0094">
    <property type="taxonomic scope" value="Bacteria"/>
</dbReference>
<dbReference type="HOGENOM" id="CLU_061015_2_1_5"/>
<dbReference type="Proteomes" id="UP000008330">
    <property type="component" value="Chromosome"/>
</dbReference>
<dbReference type="GO" id="GO:1990904">
    <property type="term" value="C:ribonucleoprotein complex"/>
    <property type="evidence" value="ECO:0007669"/>
    <property type="project" value="UniProtKB-KW"/>
</dbReference>
<dbReference type="GO" id="GO:0005840">
    <property type="term" value="C:ribosome"/>
    <property type="evidence" value="ECO:0007669"/>
    <property type="project" value="UniProtKB-KW"/>
</dbReference>
<dbReference type="GO" id="GO:0019843">
    <property type="term" value="F:rRNA binding"/>
    <property type="evidence" value="ECO:0007669"/>
    <property type="project" value="UniProtKB-UniRule"/>
</dbReference>
<dbReference type="GO" id="GO:0003735">
    <property type="term" value="F:structural constituent of ribosome"/>
    <property type="evidence" value="ECO:0007669"/>
    <property type="project" value="InterPro"/>
</dbReference>
<dbReference type="GO" id="GO:0000049">
    <property type="term" value="F:tRNA binding"/>
    <property type="evidence" value="ECO:0007669"/>
    <property type="project" value="UniProtKB-UniRule"/>
</dbReference>
<dbReference type="GO" id="GO:0006412">
    <property type="term" value="P:translation"/>
    <property type="evidence" value="ECO:0007669"/>
    <property type="project" value="UniProtKB-UniRule"/>
</dbReference>
<dbReference type="FunFam" id="3.30.1440.10:FF:000001">
    <property type="entry name" value="50S ribosomal protein L5"/>
    <property type="match status" value="1"/>
</dbReference>
<dbReference type="Gene3D" id="3.30.1440.10">
    <property type="match status" value="1"/>
</dbReference>
<dbReference type="HAMAP" id="MF_01333_B">
    <property type="entry name" value="Ribosomal_uL5_B"/>
    <property type="match status" value="1"/>
</dbReference>
<dbReference type="InterPro" id="IPR002132">
    <property type="entry name" value="Ribosomal_uL5"/>
</dbReference>
<dbReference type="InterPro" id="IPR020930">
    <property type="entry name" value="Ribosomal_uL5_bac-type"/>
</dbReference>
<dbReference type="InterPro" id="IPR031309">
    <property type="entry name" value="Ribosomal_uL5_C"/>
</dbReference>
<dbReference type="InterPro" id="IPR020929">
    <property type="entry name" value="Ribosomal_uL5_CS"/>
</dbReference>
<dbReference type="InterPro" id="IPR022803">
    <property type="entry name" value="Ribosomal_uL5_dom_sf"/>
</dbReference>
<dbReference type="InterPro" id="IPR031310">
    <property type="entry name" value="Ribosomal_uL5_N"/>
</dbReference>
<dbReference type="NCBIfam" id="NF000585">
    <property type="entry name" value="PRK00010.1"/>
    <property type="match status" value="1"/>
</dbReference>
<dbReference type="PANTHER" id="PTHR11994">
    <property type="entry name" value="60S RIBOSOMAL PROTEIN L11-RELATED"/>
    <property type="match status" value="1"/>
</dbReference>
<dbReference type="Pfam" id="PF00281">
    <property type="entry name" value="Ribosomal_L5"/>
    <property type="match status" value="1"/>
</dbReference>
<dbReference type="Pfam" id="PF00673">
    <property type="entry name" value="Ribosomal_L5_C"/>
    <property type="match status" value="1"/>
</dbReference>
<dbReference type="PIRSF" id="PIRSF002161">
    <property type="entry name" value="Ribosomal_L5"/>
    <property type="match status" value="1"/>
</dbReference>
<dbReference type="SUPFAM" id="SSF55282">
    <property type="entry name" value="RL5-like"/>
    <property type="match status" value="1"/>
</dbReference>
<dbReference type="PROSITE" id="PS00358">
    <property type="entry name" value="RIBOSOMAL_L5"/>
    <property type="match status" value="1"/>
</dbReference>
<proteinExistence type="inferred from homology"/>
<feature type="chain" id="PRO_1000142438" description="Large ribosomal subunit protein uL5">
    <location>
        <begin position="1"/>
        <end position="185"/>
    </location>
</feature>
<protein>
    <recommendedName>
        <fullName evidence="1">Large ribosomal subunit protein uL5</fullName>
    </recommendedName>
    <alternativeName>
        <fullName evidence="2">50S ribosomal protein L5</fullName>
    </alternativeName>
</protein>
<sequence length="185" mass="20981">MAEAKYEPRLKKEYVERIRKAMQEQFSYANEMMIPKLDKIVINMGVGEATADSKKPTVAAADLAAIAGQKPVITRARNSIAGFKVREQMPIGAKVTLRGARMYEFLDRLVNIALPRVRDFRGLNPKSFDGRGNFAMGIKEHIVFLEINYDKVDQMWGMDIIVCTTATTDDEARALLKEFSFPFRQ</sequence>